<protein>
    <recommendedName>
        <fullName evidence="1">Dihydroorotase</fullName>
        <shortName evidence="1">DHOase</shortName>
        <ecNumber evidence="1">3.5.2.3</ecNumber>
    </recommendedName>
</protein>
<gene>
    <name evidence="1" type="primary">pyrC</name>
    <name type="ordered locus">PBPRA2405</name>
</gene>
<reference key="1">
    <citation type="journal article" date="2005" name="Science">
        <title>Life at depth: Photobacterium profundum genome sequence and expression analysis.</title>
        <authorList>
            <person name="Vezzi A."/>
            <person name="Campanaro S."/>
            <person name="D'Angelo M."/>
            <person name="Simonato F."/>
            <person name="Vitulo N."/>
            <person name="Lauro F.M."/>
            <person name="Cestaro A."/>
            <person name="Malacrida G."/>
            <person name="Simionati B."/>
            <person name="Cannata N."/>
            <person name="Romualdi C."/>
            <person name="Bartlett D.H."/>
            <person name="Valle G."/>
        </authorList>
    </citation>
    <scope>NUCLEOTIDE SEQUENCE [LARGE SCALE GENOMIC DNA]</scope>
    <source>
        <strain>ATCC BAA-1253 / SS9</strain>
    </source>
</reference>
<feature type="chain" id="PRO_1000024029" description="Dihydroorotase">
    <location>
        <begin position="1"/>
        <end position="342"/>
    </location>
</feature>
<feature type="active site" evidence="1">
    <location>
        <position position="246"/>
    </location>
</feature>
<feature type="binding site" evidence="1">
    <location>
        <position position="13"/>
    </location>
    <ligand>
        <name>Zn(2+)</name>
        <dbReference type="ChEBI" id="CHEBI:29105"/>
        <label>1</label>
    </ligand>
</feature>
<feature type="binding site" evidence="1">
    <location>
        <begin position="15"/>
        <end position="17"/>
    </location>
    <ligand>
        <name>substrate</name>
    </ligand>
</feature>
<feature type="binding site" evidence="1">
    <location>
        <position position="15"/>
    </location>
    <ligand>
        <name>Zn(2+)</name>
        <dbReference type="ChEBI" id="CHEBI:29105"/>
        <label>1</label>
    </ligand>
</feature>
<feature type="binding site" evidence="1">
    <location>
        <position position="41"/>
    </location>
    <ligand>
        <name>substrate</name>
    </ligand>
</feature>
<feature type="binding site" description="via carbamate group" evidence="1">
    <location>
        <position position="98"/>
    </location>
    <ligand>
        <name>Zn(2+)</name>
        <dbReference type="ChEBI" id="CHEBI:29105"/>
        <label>1</label>
    </ligand>
</feature>
<feature type="binding site" description="via carbamate group" evidence="1">
    <location>
        <position position="98"/>
    </location>
    <ligand>
        <name>Zn(2+)</name>
        <dbReference type="ChEBI" id="CHEBI:29105"/>
        <label>2</label>
    </ligand>
</feature>
<feature type="binding site" evidence="1">
    <location>
        <position position="135"/>
    </location>
    <ligand>
        <name>substrate</name>
    </ligand>
</feature>
<feature type="binding site" evidence="1">
    <location>
        <position position="135"/>
    </location>
    <ligand>
        <name>Zn(2+)</name>
        <dbReference type="ChEBI" id="CHEBI:29105"/>
        <label>2</label>
    </ligand>
</feature>
<feature type="binding site" evidence="1">
    <location>
        <position position="173"/>
    </location>
    <ligand>
        <name>Zn(2+)</name>
        <dbReference type="ChEBI" id="CHEBI:29105"/>
        <label>2</label>
    </ligand>
</feature>
<feature type="binding site" evidence="1">
    <location>
        <position position="218"/>
    </location>
    <ligand>
        <name>substrate</name>
    </ligand>
</feature>
<feature type="binding site" evidence="1">
    <location>
        <position position="246"/>
    </location>
    <ligand>
        <name>Zn(2+)</name>
        <dbReference type="ChEBI" id="CHEBI:29105"/>
        <label>1</label>
    </ligand>
</feature>
<feature type="binding site" evidence="1">
    <location>
        <position position="250"/>
    </location>
    <ligand>
        <name>substrate</name>
    </ligand>
</feature>
<feature type="binding site" evidence="1">
    <location>
        <position position="262"/>
    </location>
    <ligand>
        <name>substrate</name>
    </ligand>
</feature>
<feature type="modified residue" description="N6-carboxylysine" evidence="1">
    <location>
        <position position="98"/>
    </location>
</feature>
<evidence type="ECO:0000255" key="1">
    <source>
        <dbReference type="HAMAP-Rule" id="MF_00219"/>
    </source>
</evidence>
<sequence>MTTITITRPDDWHVHLRDGDVLKDTVRDISRYMGRAIIMPNLIPPVIDTESALSYRERIIAQGPQGNFSPLMVIYLTDNTSAEEIHKAKASGHVYAAKLYPAGATTNSDSGVTSIDHIRPALQAMQEAGMQLLIHGEVTAHDIDIFDREKVFLETVLAPIVEQFPNLRMVLEHITTADAVEFVTNAGPNVGATITAHHLMFNRNHMLVGGIRPHFYCLPILKRNIHQDALVKAATSGNPKFFLGTDSAPHAQGRKESACGCAGSYTAHAAIELYAEVFEAADALDKLEAFSSFNGPDFYNLPRNTDTITLKKESWNVPETMAFGGDEVVPIRAGEAMLWKVI</sequence>
<accession>Q6LPI7</accession>
<proteinExistence type="inferred from homology"/>
<organism>
    <name type="scientific">Photobacterium profundum (strain SS9)</name>
    <dbReference type="NCBI Taxonomy" id="298386"/>
    <lineage>
        <taxon>Bacteria</taxon>
        <taxon>Pseudomonadati</taxon>
        <taxon>Pseudomonadota</taxon>
        <taxon>Gammaproteobacteria</taxon>
        <taxon>Vibrionales</taxon>
        <taxon>Vibrionaceae</taxon>
        <taxon>Photobacterium</taxon>
    </lineage>
</organism>
<name>PYRC_PHOPR</name>
<keyword id="KW-0378">Hydrolase</keyword>
<keyword id="KW-0479">Metal-binding</keyword>
<keyword id="KW-0665">Pyrimidine biosynthesis</keyword>
<keyword id="KW-1185">Reference proteome</keyword>
<keyword id="KW-0862">Zinc</keyword>
<comment type="function">
    <text evidence="1">Catalyzes the reversible cyclization of carbamoyl aspartate to dihydroorotate.</text>
</comment>
<comment type="catalytic activity">
    <reaction evidence="1">
        <text>(S)-dihydroorotate + H2O = N-carbamoyl-L-aspartate + H(+)</text>
        <dbReference type="Rhea" id="RHEA:24296"/>
        <dbReference type="ChEBI" id="CHEBI:15377"/>
        <dbReference type="ChEBI" id="CHEBI:15378"/>
        <dbReference type="ChEBI" id="CHEBI:30864"/>
        <dbReference type="ChEBI" id="CHEBI:32814"/>
        <dbReference type="EC" id="3.5.2.3"/>
    </reaction>
</comment>
<comment type="cofactor">
    <cofactor evidence="1">
        <name>Zn(2+)</name>
        <dbReference type="ChEBI" id="CHEBI:29105"/>
    </cofactor>
    <text evidence="1">Binds 2 Zn(2+) ions per subunit.</text>
</comment>
<comment type="pathway">
    <text evidence="1">Pyrimidine metabolism; UMP biosynthesis via de novo pathway; (S)-dihydroorotate from bicarbonate: step 3/3.</text>
</comment>
<comment type="subunit">
    <text evidence="1">Homodimer.</text>
</comment>
<comment type="similarity">
    <text evidence="1">Belongs to the metallo-dependent hydrolases superfamily. DHOase family. Class II DHOase subfamily.</text>
</comment>
<dbReference type="EC" id="3.5.2.3" evidence="1"/>
<dbReference type="EMBL" id="CR378670">
    <property type="protein sequence ID" value="CAG20789.1"/>
    <property type="molecule type" value="Genomic_DNA"/>
</dbReference>
<dbReference type="RefSeq" id="WP_011219073.1">
    <property type="nucleotide sequence ID" value="NC_006370.1"/>
</dbReference>
<dbReference type="SMR" id="Q6LPI7"/>
<dbReference type="STRING" id="298386.PBPRA2405"/>
<dbReference type="MEROPS" id="M38.A02"/>
<dbReference type="KEGG" id="ppr:PBPRA2405"/>
<dbReference type="eggNOG" id="COG0418">
    <property type="taxonomic scope" value="Bacteria"/>
</dbReference>
<dbReference type="HOGENOM" id="CLU_041558_1_0_6"/>
<dbReference type="UniPathway" id="UPA00070">
    <property type="reaction ID" value="UER00117"/>
</dbReference>
<dbReference type="Proteomes" id="UP000000593">
    <property type="component" value="Chromosome 1"/>
</dbReference>
<dbReference type="GO" id="GO:0005829">
    <property type="term" value="C:cytosol"/>
    <property type="evidence" value="ECO:0007669"/>
    <property type="project" value="TreeGrafter"/>
</dbReference>
<dbReference type="GO" id="GO:0004151">
    <property type="term" value="F:dihydroorotase activity"/>
    <property type="evidence" value="ECO:0007669"/>
    <property type="project" value="UniProtKB-UniRule"/>
</dbReference>
<dbReference type="GO" id="GO:0008270">
    <property type="term" value="F:zinc ion binding"/>
    <property type="evidence" value="ECO:0007669"/>
    <property type="project" value="UniProtKB-UniRule"/>
</dbReference>
<dbReference type="GO" id="GO:0006207">
    <property type="term" value="P:'de novo' pyrimidine nucleobase biosynthetic process"/>
    <property type="evidence" value="ECO:0007669"/>
    <property type="project" value="TreeGrafter"/>
</dbReference>
<dbReference type="GO" id="GO:0044205">
    <property type="term" value="P:'de novo' UMP biosynthetic process"/>
    <property type="evidence" value="ECO:0007669"/>
    <property type="project" value="UniProtKB-UniRule"/>
</dbReference>
<dbReference type="CDD" id="cd01294">
    <property type="entry name" value="DHOase"/>
    <property type="match status" value="1"/>
</dbReference>
<dbReference type="FunFam" id="3.20.20.140:FF:000006">
    <property type="entry name" value="Dihydroorotase"/>
    <property type="match status" value="1"/>
</dbReference>
<dbReference type="Gene3D" id="3.20.20.140">
    <property type="entry name" value="Metal-dependent hydrolases"/>
    <property type="match status" value="1"/>
</dbReference>
<dbReference type="HAMAP" id="MF_00219">
    <property type="entry name" value="PyrC_classII"/>
    <property type="match status" value="1"/>
</dbReference>
<dbReference type="InterPro" id="IPR006680">
    <property type="entry name" value="Amidohydro-rel"/>
</dbReference>
<dbReference type="InterPro" id="IPR004721">
    <property type="entry name" value="DHOdimr"/>
</dbReference>
<dbReference type="InterPro" id="IPR002195">
    <property type="entry name" value="Dihydroorotase_CS"/>
</dbReference>
<dbReference type="InterPro" id="IPR032466">
    <property type="entry name" value="Metal_Hydrolase"/>
</dbReference>
<dbReference type="NCBIfam" id="TIGR00856">
    <property type="entry name" value="pyrC_dimer"/>
    <property type="match status" value="1"/>
</dbReference>
<dbReference type="PANTHER" id="PTHR43137">
    <property type="entry name" value="DIHYDROOROTASE"/>
    <property type="match status" value="1"/>
</dbReference>
<dbReference type="PANTHER" id="PTHR43137:SF1">
    <property type="entry name" value="DIHYDROOROTASE"/>
    <property type="match status" value="1"/>
</dbReference>
<dbReference type="Pfam" id="PF01979">
    <property type="entry name" value="Amidohydro_1"/>
    <property type="match status" value="1"/>
</dbReference>
<dbReference type="PIRSF" id="PIRSF001237">
    <property type="entry name" value="DHOdimr"/>
    <property type="match status" value="1"/>
</dbReference>
<dbReference type="SUPFAM" id="SSF51556">
    <property type="entry name" value="Metallo-dependent hydrolases"/>
    <property type="match status" value="1"/>
</dbReference>
<dbReference type="PROSITE" id="PS00482">
    <property type="entry name" value="DIHYDROOROTASE_1"/>
    <property type="match status" value="1"/>
</dbReference>
<dbReference type="PROSITE" id="PS00483">
    <property type="entry name" value="DIHYDROOROTASE_2"/>
    <property type="match status" value="1"/>
</dbReference>